<gene>
    <name evidence="1" type="primary">ubiD</name>
    <name type="ordered locus">BPEN_647</name>
</gene>
<name>UBID_BLOPB</name>
<proteinExistence type="inferred from homology"/>
<comment type="function">
    <text evidence="1">Catalyzes the decarboxylation of 3-octaprenyl-4-hydroxy benzoate to 2-octaprenylphenol, an intermediate step in ubiquinone biosynthesis.</text>
</comment>
<comment type="catalytic activity">
    <reaction evidence="1">
        <text>a 4-hydroxy-3-(all-trans-polyprenyl)benzoate + H(+) = a 2-(all-trans-polyprenyl)phenol + CO2</text>
        <dbReference type="Rhea" id="RHEA:41680"/>
        <dbReference type="Rhea" id="RHEA-COMP:9514"/>
        <dbReference type="Rhea" id="RHEA-COMP:9516"/>
        <dbReference type="ChEBI" id="CHEBI:1269"/>
        <dbReference type="ChEBI" id="CHEBI:15378"/>
        <dbReference type="ChEBI" id="CHEBI:16526"/>
        <dbReference type="ChEBI" id="CHEBI:78396"/>
        <dbReference type="EC" id="4.1.1.98"/>
    </reaction>
</comment>
<comment type="cofactor">
    <cofactor evidence="1">
        <name>prenylated FMN</name>
        <dbReference type="ChEBI" id="CHEBI:87746"/>
    </cofactor>
    <text evidence="1">Binds 1 prenylated FMN per subunit.</text>
</comment>
<comment type="cofactor">
    <cofactor evidence="1">
        <name>Mn(2+)</name>
        <dbReference type="ChEBI" id="CHEBI:29035"/>
    </cofactor>
</comment>
<comment type="pathway">
    <text evidence="1">Cofactor biosynthesis; ubiquinone biosynthesis.</text>
</comment>
<comment type="subunit">
    <text evidence="1">Homohexamer.</text>
</comment>
<comment type="subcellular location">
    <subcellularLocation>
        <location evidence="1">Cell membrane</location>
        <topology evidence="1">Peripheral membrane protein</topology>
    </subcellularLocation>
</comment>
<comment type="similarity">
    <text evidence="1">Belongs to the UbiD family.</text>
</comment>
<protein>
    <recommendedName>
        <fullName evidence="1">3-octaprenyl-4-hydroxybenzoate carboxy-lyase</fullName>
        <ecNumber evidence="1">4.1.1.98</ecNumber>
    </recommendedName>
    <alternativeName>
        <fullName evidence="1">Polyprenyl p-hydroxybenzoate decarboxylase</fullName>
    </alternativeName>
</protein>
<evidence type="ECO:0000255" key="1">
    <source>
        <dbReference type="HAMAP-Rule" id="MF_01636"/>
    </source>
</evidence>
<feature type="chain" id="PRO_0000267648" description="3-octaprenyl-4-hydroxybenzoate carboxy-lyase">
    <location>
        <begin position="1"/>
        <end position="487"/>
    </location>
</feature>
<feature type="active site" description="Proton donor" evidence="1">
    <location>
        <position position="287"/>
    </location>
</feature>
<feature type="binding site" evidence="1">
    <location>
        <position position="172"/>
    </location>
    <ligand>
        <name>Mn(2+)</name>
        <dbReference type="ChEBI" id="CHEBI:29035"/>
    </ligand>
</feature>
<feature type="binding site" evidence="1">
    <location>
        <begin position="175"/>
        <end position="177"/>
    </location>
    <ligand>
        <name>prenylated FMN</name>
        <dbReference type="ChEBI" id="CHEBI:87746"/>
    </ligand>
</feature>
<feature type="binding site" evidence="1">
    <location>
        <begin position="189"/>
        <end position="191"/>
    </location>
    <ligand>
        <name>prenylated FMN</name>
        <dbReference type="ChEBI" id="CHEBI:87746"/>
    </ligand>
</feature>
<feature type="binding site" evidence="1">
    <location>
        <begin position="194"/>
        <end position="195"/>
    </location>
    <ligand>
        <name>prenylated FMN</name>
        <dbReference type="ChEBI" id="CHEBI:87746"/>
    </ligand>
</feature>
<feature type="binding site" evidence="1">
    <location>
        <position position="238"/>
    </location>
    <ligand>
        <name>Mn(2+)</name>
        <dbReference type="ChEBI" id="CHEBI:29035"/>
    </ligand>
</feature>
<sequence>MKYKDLRDFIKILEHRGDLKRIKFPINPDLEITEIADRTIKSGGPALFFENPTGYTIPVLCNLFGTPNRIALGMGKESILSLRDVGKLLAFLREPELPTGVHDFFSKIPHFRHILHMPIKRVSTAPCQENVWCNQDVDITHMPIMRCWPQDVSPVITWGITITRGLKSKRQNLGIYRQQVLSKNKIIMRWLSHRGGALDFQEWHKNTSERRFPITVALGADPATLIGAVVPIPDTLSEYAFSGLLRGCRTEVIKCISCDLDVPANSEIVLEGYLERDETAIEGPFGDHTGYYNTTAKFPVCTITHITQRNNPIYLSTYTGRPPDEPAILGMAMNEMFIPIIQKQFPEITDFYLPPEGCSYRLAIVTIKKQYIGHAKRIIFGIWSFLKQFMYTKFIIVCDDDINARDWNDVVWAITTRMEPDRDTIIVKNTPIDYLDFSSPISGLGSKIGMDATNKWPGETEREWGIPIKMHDTVRHYIDSIWDKLDI</sequence>
<reference key="1">
    <citation type="journal article" date="2005" name="Genome Res.">
        <title>Genome sequence of Blochmannia pennsylvanicus indicates parallel evolutionary trends among bacterial mutualists of insects.</title>
        <authorList>
            <person name="Degnan P.H."/>
            <person name="Lazarus A.B."/>
            <person name="Wernegreen J.J."/>
        </authorList>
    </citation>
    <scope>NUCLEOTIDE SEQUENCE [LARGE SCALE GENOMIC DNA]</scope>
    <source>
        <strain>BPEN</strain>
    </source>
</reference>
<dbReference type="EC" id="4.1.1.98" evidence="1"/>
<dbReference type="EMBL" id="CP000016">
    <property type="protein sequence ID" value="AAZ41245.1"/>
    <property type="molecule type" value="Genomic_DNA"/>
</dbReference>
<dbReference type="RefSeq" id="WP_011283156.1">
    <property type="nucleotide sequence ID" value="NC_007292.1"/>
</dbReference>
<dbReference type="SMR" id="Q491V9"/>
<dbReference type="STRING" id="291272.BPEN_647"/>
<dbReference type="KEGG" id="bpn:BPEN_647"/>
<dbReference type="eggNOG" id="COG0043">
    <property type="taxonomic scope" value="Bacteria"/>
</dbReference>
<dbReference type="HOGENOM" id="CLU_023348_4_1_6"/>
<dbReference type="OrthoDB" id="9809841at2"/>
<dbReference type="UniPathway" id="UPA00232"/>
<dbReference type="Proteomes" id="UP000007794">
    <property type="component" value="Chromosome"/>
</dbReference>
<dbReference type="GO" id="GO:0005829">
    <property type="term" value="C:cytosol"/>
    <property type="evidence" value="ECO:0007669"/>
    <property type="project" value="TreeGrafter"/>
</dbReference>
<dbReference type="GO" id="GO:0005886">
    <property type="term" value="C:plasma membrane"/>
    <property type="evidence" value="ECO:0007669"/>
    <property type="project" value="UniProtKB-SubCell"/>
</dbReference>
<dbReference type="GO" id="GO:0008694">
    <property type="term" value="F:3-octaprenyl-4-hydroxybenzoate carboxy-lyase activity"/>
    <property type="evidence" value="ECO:0007669"/>
    <property type="project" value="UniProtKB-UniRule"/>
</dbReference>
<dbReference type="GO" id="GO:0046872">
    <property type="term" value="F:metal ion binding"/>
    <property type="evidence" value="ECO:0007669"/>
    <property type="project" value="UniProtKB-KW"/>
</dbReference>
<dbReference type="GO" id="GO:0006744">
    <property type="term" value="P:ubiquinone biosynthetic process"/>
    <property type="evidence" value="ECO:0007669"/>
    <property type="project" value="UniProtKB-UniRule"/>
</dbReference>
<dbReference type="FunFam" id="3.40.1670.10:FF:000001">
    <property type="entry name" value="3-octaprenyl-4-hydroxybenzoate carboxy-lyase"/>
    <property type="match status" value="1"/>
</dbReference>
<dbReference type="Gene3D" id="1.20.5.570">
    <property type="entry name" value="Single helix bin"/>
    <property type="match status" value="1"/>
</dbReference>
<dbReference type="Gene3D" id="3.40.1670.10">
    <property type="entry name" value="UbiD C-terminal domain-like"/>
    <property type="match status" value="1"/>
</dbReference>
<dbReference type="HAMAP" id="MF_01636">
    <property type="entry name" value="UbiD"/>
    <property type="match status" value="1"/>
</dbReference>
<dbReference type="InterPro" id="IPR002830">
    <property type="entry name" value="UbiD"/>
</dbReference>
<dbReference type="InterPro" id="IPR049381">
    <property type="entry name" value="UbiD-like_C"/>
</dbReference>
<dbReference type="InterPro" id="IPR049383">
    <property type="entry name" value="UbiD-like_N"/>
</dbReference>
<dbReference type="InterPro" id="IPR023677">
    <property type="entry name" value="UbiD_bacteria"/>
</dbReference>
<dbReference type="InterPro" id="IPR048304">
    <property type="entry name" value="UbiD_Rift_dom"/>
</dbReference>
<dbReference type="NCBIfam" id="NF008175">
    <property type="entry name" value="PRK10922.1"/>
    <property type="match status" value="1"/>
</dbReference>
<dbReference type="NCBIfam" id="TIGR00148">
    <property type="entry name" value="UbiD family decarboxylase"/>
    <property type="match status" value="1"/>
</dbReference>
<dbReference type="PANTHER" id="PTHR30108">
    <property type="entry name" value="3-OCTAPRENYL-4-HYDROXYBENZOATE CARBOXY-LYASE-RELATED"/>
    <property type="match status" value="1"/>
</dbReference>
<dbReference type="PANTHER" id="PTHR30108:SF17">
    <property type="entry name" value="FERULIC ACID DECARBOXYLASE 1"/>
    <property type="match status" value="1"/>
</dbReference>
<dbReference type="Pfam" id="PF01977">
    <property type="entry name" value="UbiD"/>
    <property type="match status" value="1"/>
</dbReference>
<dbReference type="Pfam" id="PF20696">
    <property type="entry name" value="UbiD_C"/>
    <property type="match status" value="1"/>
</dbReference>
<dbReference type="Pfam" id="PF20695">
    <property type="entry name" value="UbiD_N"/>
    <property type="match status" value="1"/>
</dbReference>
<dbReference type="SUPFAM" id="SSF50475">
    <property type="entry name" value="FMN-binding split barrel"/>
    <property type="match status" value="1"/>
</dbReference>
<dbReference type="SUPFAM" id="SSF143968">
    <property type="entry name" value="UbiD C-terminal domain-like"/>
    <property type="match status" value="1"/>
</dbReference>
<accession>Q491V9</accession>
<organism>
    <name type="scientific">Blochmanniella pennsylvanica (strain BPEN)</name>
    <dbReference type="NCBI Taxonomy" id="291272"/>
    <lineage>
        <taxon>Bacteria</taxon>
        <taxon>Pseudomonadati</taxon>
        <taxon>Pseudomonadota</taxon>
        <taxon>Gammaproteobacteria</taxon>
        <taxon>Enterobacterales</taxon>
        <taxon>Enterobacteriaceae</taxon>
        <taxon>ant endosymbionts</taxon>
        <taxon>Candidatus Blochmanniella</taxon>
    </lineage>
</organism>
<keyword id="KW-1003">Cell membrane</keyword>
<keyword id="KW-0210">Decarboxylase</keyword>
<keyword id="KW-0285">Flavoprotein</keyword>
<keyword id="KW-0288">FMN</keyword>
<keyword id="KW-0456">Lyase</keyword>
<keyword id="KW-0464">Manganese</keyword>
<keyword id="KW-0472">Membrane</keyword>
<keyword id="KW-0479">Metal-binding</keyword>
<keyword id="KW-1185">Reference proteome</keyword>
<keyword id="KW-0831">Ubiquinone biosynthesis</keyword>